<comment type="function">
    <text evidence="1">Catalyzes the reversible phosphorylation of UMP to UDP.</text>
</comment>
<comment type="catalytic activity">
    <reaction evidence="1">
        <text>UMP + ATP = UDP + ADP</text>
        <dbReference type="Rhea" id="RHEA:24400"/>
        <dbReference type="ChEBI" id="CHEBI:30616"/>
        <dbReference type="ChEBI" id="CHEBI:57865"/>
        <dbReference type="ChEBI" id="CHEBI:58223"/>
        <dbReference type="ChEBI" id="CHEBI:456216"/>
        <dbReference type="EC" id="2.7.4.22"/>
    </reaction>
</comment>
<comment type="activity regulation">
    <text evidence="1">Allosterically activated by GTP. Inhibited by UTP.</text>
</comment>
<comment type="pathway">
    <text evidence="1">Pyrimidine metabolism; CTP biosynthesis via de novo pathway; UDP from UMP (UMPK route): step 1/1.</text>
</comment>
<comment type="subunit">
    <text evidence="1">Homohexamer.</text>
</comment>
<comment type="subcellular location">
    <subcellularLocation>
        <location evidence="1">Cytoplasm</location>
    </subcellularLocation>
</comment>
<comment type="similarity">
    <text evidence="1">Belongs to the UMP kinase family.</text>
</comment>
<accession>P65935</accession>
<accession>P59006</accession>
<accession>Q99UL3</accession>
<proteinExistence type="inferred from homology"/>
<organism>
    <name type="scientific">Staphylococcus aureus (strain Mu50 / ATCC 700699)</name>
    <dbReference type="NCBI Taxonomy" id="158878"/>
    <lineage>
        <taxon>Bacteria</taxon>
        <taxon>Bacillati</taxon>
        <taxon>Bacillota</taxon>
        <taxon>Bacilli</taxon>
        <taxon>Bacillales</taxon>
        <taxon>Staphylococcaceae</taxon>
        <taxon>Staphylococcus</taxon>
    </lineage>
</organism>
<sequence>MAQISKYKRVVLKLSGEALAGEKGFGINPVIIKSVAEQVAEVAKMDCEIAVIVGGGNIWRGKTGSDLGMDRGTADYMGMLATVMNALALQDSLEQLDCDTRVLTSIEMKQVAEPYIRRRAIRHLEKKRVVIFAAGIGNPYFSTDTTAALRAAEVEADVILMGKNNVDGVYSADPKVNKDAVKYEHLTHIQMLQEGLQVMDSTASSFCMDNNIPLTVFSIMEEGNIKRAVMGEKIGTLITK</sequence>
<dbReference type="EC" id="2.7.4.22" evidence="1"/>
<dbReference type="EMBL" id="BA000017">
    <property type="protein sequence ID" value="BAB57420.1"/>
    <property type="molecule type" value="Genomic_DNA"/>
</dbReference>
<dbReference type="RefSeq" id="WP_000057330.1">
    <property type="nucleotide sequence ID" value="NC_002758.2"/>
</dbReference>
<dbReference type="SMR" id="P65935"/>
<dbReference type="GeneID" id="98345574"/>
<dbReference type="KEGG" id="sav:SAV1258"/>
<dbReference type="HOGENOM" id="CLU_033861_0_0_9"/>
<dbReference type="PhylomeDB" id="P65935"/>
<dbReference type="UniPathway" id="UPA00159">
    <property type="reaction ID" value="UER00275"/>
</dbReference>
<dbReference type="Proteomes" id="UP000002481">
    <property type="component" value="Chromosome"/>
</dbReference>
<dbReference type="GO" id="GO:0005737">
    <property type="term" value="C:cytoplasm"/>
    <property type="evidence" value="ECO:0007669"/>
    <property type="project" value="UniProtKB-SubCell"/>
</dbReference>
<dbReference type="GO" id="GO:0005524">
    <property type="term" value="F:ATP binding"/>
    <property type="evidence" value="ECO:0007669"/>
    <property type="project" value="UniProtKB-KW"/>
</dbReference>
<dbReference type="GO" id="GO:0033862">
    <property type="term" value="F:UMP kinase activity"/>
    <property type="evidence" value="ECO:0007669"/>
    <property type="project" value="UniProtKB-EC"/>
</dbReference>
<dbReference type="GO" id="GO:0044210">
    <property type="term" value="P:'de novo' CTP biosynthetic process"/>
    <property type="evidence" value="ECO:0007669"/>
    <property type="project" value="UniProtKB-UniRule"/>
</dbReference>
<dbReference type="GO" id="GO:0006225">
    <property type="term" value="P:UDP biosynthetic process"/>
    <property type="evidence" value="ECO:0007669"/>
    <property type="project" value="TreeGrafter"/>
</dbReference>
<dbReference type="CDD" id="cd04254">
    <property type="entry name" value="AAK_UMPK-PyrH-Ec"/>
    <property type="match status" value="1"/>
</dbReference>
<dbReference type="FunFam" id="3.40.1160.10:FF:000001">
    <property type="entry name" value="Uridylate kinase"/>
    <property type="match status" value="1"/>
</dbReference>
<dbReference type="Gene3D" id="3.40.1160.10">
    <property type="entry name" value="Acetylglutamate kinase-like"/>
    <property type="match status" value="1"/>
</dbReference>
<dbReference type="HAMAP" id="MF_01220_B">
    <property type="entry name" value="PyrH_B"/>
    <property type="match status" value="1"/>
</dbReference>
<dbReference type="InterPro" id="IPR036393">
    <property type="entry name" value="AceGlu_kinase-like_sf"/>
</dbReference>
<dbReference type="InterPro" id="IPR001048">
    <property type="entry name" value="Asp/Glu/Uridylate_kinase"/>
</dbReference>
<dbReference type="InterPro" id="IPR011817">
    <property type="entry name" value="Uridylate_kinase"/>
</dbReference>
<dbReference type="InterPro" id="IPR015963">
    <property type="entry name" value="Uridylate_kinase_bac"/>
</dbReference>
<dbReference type="NCBIfam" id="TIGR02075">
    <property type="entry name" value="pyrH_bact"/>
    <property type="match status" value="1"/>
</dbReference>
<dbReference type="PANTHER" id="PTHR42833">
    <property type="entry name" value="URIDYLATE KINASE"/>
    <property type="match status" value="1"/>
</dbReference>
<dbReference type="PANTHER" id="PTHR42833:SF4">
    <property type="entry name" value="URIDYLATE KINASE PUMPKIN, CHLOROPLASTIC"/>
    <property type="match status" value="1"/>
</dbReference>
<dbReference type="Pfam" id="PF00696">
    <property type="entry name" value="AA_kinase"/>
    <property type="match status" value="1"/>
</dbReference>
<dbReference type="PIRSF" id="PIRSF005650">
    <property type="entry name" value="Uridylate_kin"/>
    <property type="match status" value="1"/>
</dbReference>
<dbReference type="SUPFAM" id="SSF53633">
    <property type="entry name" value="Carbamate kinase-like"/>
    <property type="match status" value="1"/>
</dbReference>
<gene>
    <name evidence="1" type="primary">pyrH</name>
    <name type="synonym">smbA</name>
    <name type="ordered locus">SAV1258</name>
</gene>
<evidence type="ECO:0000255" key="1">
    <source>
        <dbReference type="HAMAP-Rule" id="MF_01220"/>
    </source>
</evidence>
<name>PYRH_STAAM</name>
<protein>
    <recommendedName>
        <fullName evidence="1">Uridylate kinase</fullName>
        <shortName evidence="1">UK</shortName>
        <ecNumber evidence="1">2.7.4.22</ecNumber>
    </recommendedName>
    <alternativeName>
        <fullName evidence="1">Uridine monophosphate kinase</fullName>
        <shortName evidence="1">UMP kinase</shortName>
        <shortName evidence="1">UMPK</shortName>
    </alternativeName>
</protein>
<feature type="chain" id="PRO_0000143882" description="Uridylate kinase">
    <location>
        <begin position="1"/>
        <end position="240"/>
    </location>
</feature>
<feature type="region of interest" description="Involved in allosteric activation by GTP" evidence="1">
    <location>
        <begin position="21"/>
        <end position="26"/>
    </location>
</feature>
<feature type="binding site" evidence="1">
    <location>
        <begin position="13"/>
        <end position="16"/>
    </location>
    <ligand>
        <name>ATP</name>
        <dbReference type="ChEBI" id="CHEBI:30616"/>
    </ligand>
</feature>
<feature type="binding site" evidence="1">
    <location>
        <position position="55"/>
    </location>
    <ligand>
        <name>UMP</name>
        <dbReference type="ChEBI" id="CHEBI:57865"/>
    </ligand>
</feature>
<feature type="binding site" evidence="1">
    <location>
        <position position="56"/>
    </location>
    <ligand>
        <name>ATP</name>
        <dbReference type="ChEBI" id="CHEBI:30616"/>
    </ligand>
</feature>
<feature type="binding site" evidence="1">
    <location>
        <position position="60"/>
    </location>
    <ligand>
        <name>ATP</name>
        <dbReference type="ChEBI" id="CHEBI:30616"/>
    </ligand>
</feature>
<feature type="binding site" evidence="1">
    <location>
        <position position="75"/>
    </location>
    <ligand>
        <name>UMP</name>
        <dbReference type="ChEBI" id="CHEBI:57865"/>
    </ligand>
</feature>
<feature type="binding site" evidence="1">
    <location>
        <begin position="136"/>
        <end position="143"/>
    </location>
    <ligand>
        <name>UMP</name>
        <dbReference type="ChEBI" id="CHEBI:57865"/>
    </ligand>
</feature>
<feature type="binding site" evidence="1">
    <location>
        <position position="164"/>
    </location>
    <ligand>
        <name>ATP</name>
        <dbReference type="ChEBI" id="CHEBI:30616"/>
    </ligand>
</feature>
<feature type="binding site" evidence="1">
    <location>
        <position position="170"/>
    </location>
    <ligand>
        <name>ATP</name>
        <dbReference type="ChEBI" id="CHEBI:30616"/>
    </ligand>
</feature>
<feature type="binding site" evidence="1">
    <location>
        <position position="173"/>
    </location>
    <ligand>
        <name>ATP</name>
        <dbReference type="ChEBI" id="CHEBI:30616"/>
    </ligand>
</feature>
<reference key="1">
    <citation type="journal article" date="2001" name="Lancet">
        <title>Whole genome sequencing of meticillin-resistant Staphylococcus aureus.</title>
        <authorList>
            <person name="Kuroda M."/>
            <person name="Ohta T."/>
            <person name="Uchiyama I."/>
            <person name="Baba T."/>
            <person name="Yuzawa H."/>
            <person name="Kobayashi I."/>
            <person name="Cui L."/>
            <person name="Oguchi A."/>
            <person name="Aoki K."/>
            <person name="Nagai Y."/>
            <person name="Lian J.-Q."/>
            <person name="Ito T."/>
            <person name="Kanamori M."/>
            <person name="Matsumaru H."/>
            <person name="Maruyama A."/>
            <person name="Murakami H."/>
            <person name="Hosoyama A."/>
            <person name="Mizutani-Ui Y."/>
            <person name="Takahashi N.K."/>
            <person name="Sawano T."/>
            <person name="Inoue R."/>
            <person name="Kaito C."/>
            <person name="Sekimizu K."/>
            <person name="Hirakawa H."/>
            <person name="Kuhara S."/>
            <person name="Goto S."/>
            <person name="Yabuzaki J."/>
            <person name="Kanehisa M."/>
            <person name="Yamashita A."/>
            <person name="Oshima K."/>
            <person name="Furuya K."/>
            <person name="Yoshino C."/>
            <person name="Shiba T."/>
            <person name="Hattori M."/>
            <person name="Ogasawara N."/>
            <person name="Hayashi H."/>
            <person name="Hiramatsu K."/>
        </authorList>
    </citation>
    <scope>NUCLEOTIDE SEQUENCE [LARGE SCALE GENOMIC DNA]</scope>
    <source>
        <strain>Mu50 / ATCC 700699</strain>
    </source>
</reference>
<keyword id="KW-0021">Allosteric enzyme</keyword>
<keyword id="KW-0067">ATP-binding</keyword>
<keyword id="KW-0963">Cytoplasm</keyword>
<keyword id="KW-0418">Kinase</keyword>
<keyword id="KW-0547">Nucleotide-binding</keyword>
<keyword id="KW-0665">Pyrimidine biosynthesis</keyword>
<keyword id="KW-0808">Transferase</keyword>